<feature type="chain" id="PRO_1000203071" description="Aspartyl/glutamyl-tRNA(Asn/Gln) amidotransferase subunit C">
    <location>
        <begin position="1"/>
        <end position="95"/>
    </location>
</feature>
<comment type="function">
    <text evidence="1">Allows the formation of correctly charged Asn-tRNA(Asn) or Gln-tRNA(Gln) through the transamidation of misacylated Asp-tRNA(Asn) or Glu-tRNA(Gln) in organisms which lack either or both of asparaginyl-tRNA or glutaminyl-tRNA synthetases. The reaction takes place in the presence of glutamine and ATP through an activated phospho-Asp-tRNA(Asn) or phospho-Glu-tRNA(Gln).</text>
</comment>
<comment type="catalytic activity">
    <reaction evidence="1">
        <text>L-glutamyl-tRNA(Gln) + L-glutamine + ATP + H2O = L-glutaminyl-tRNA(Gln) + L-glutamate + ADP + phosphate + H(+)</text>
        <dbReference type="Rhea" id="RHEA:17521"/>
        <dbReference type="Rhea" id="RHEA-COMP:9681"/>
        <dbReference type="Rhea" id="RHEA-COMP:9684"/>
        <dbReference type="ChEBI" id="CHEBI:15377"/>
        <dbReference type="ChEBI" id="CHEBI:15378"/>
        <dbReference type="ChEBI" id="CHEBI:29985"/>
        <dbReference type="ChEBI" id="CHEBI:30616"/>
        <dbReference type="ChEBI" id="CHEBI:43474"/>
        <dbReference type="ChEBI" id="CHEBI:58359"/>
        <dbReference type="ChEBI" id="CHEBI:78520"/>
        <dbReference type="ChEBI" id="CHEBI:78521"/>
        <dbReference type="ChEBI" id="CHEBI:456216"/>
    </reaction>
</comment>
<comment type="catalytic activity">
    <reaction evidence="1">
        <text>L-aspartyl-tRNA(Asn) + L-glutamine + ATP + H2O = L-asparaginyl-tRNA(Asn) + L-glutamate + ADP + phosphate + 2 H(+)</text>
        <dbReference type="Rhea" id="RHEA:14513"/>
        <dbReference type="Rhea" id="RHEA-COMP:9674"/>
        <dbReference type="Rhea" id="RHEA-COMP:9677"/>
        <dbReference type="ChEBI" id="CHEBI:15377"/>
        <dbReference type="ChEBI" id="CHEBI:15378"/>
        <dbReference type="ChEBI" id="CHEBI:29985"/>
        <dbReference type="ChEBI" id="CHEBI:30616"/>
        <dbReference type="ChEBI" id="CHEBI:43474"/>
        <dbReference type="ChEBI" id="CHEBI:58359"/>
        <dbReference type="ChEBI" id="CHEBI:78515"/>
        <dbReference type="ChEBI" id="CHEBI:78516"/>
        <dbReference type="ChEBI" id="CHEBI:456216"/>
    </reaction>
</comment>
<comment type="subunit">
    <text evidence="1">Heterotrimer of A, B and C subunits.</text>
</comment>
<comment type="similarity">
    <text evidence="1">Belongs to the GatC family.</text>
</comment>
<sequence>MKITREQVEHVARLARLELSEAELDTFTGQMDSILSYVEKLNALDTEGIVPTSHAVPMENAFRADEATGSIGVEAALANAPLRAESFFRVPKVIE</sequence>
<protein>
    <recommendedName>
        <fullName evidence="1">Aspartyl/glutamyl-tRNA(Asn/Gln) amidotransferase subunit C</fullName>
        <shortName evidence="1">Asp/Glu-ADT subunit C</shortName>
        <ecNumber evidence="1">6.3.5.-</ecNumber>
    </recommendedName>
</protein>
<reference key="1">
    <citation type="submission" date="2009-07" db="EMBL/GenBank/DDBJ databases">
        <title>Complete sequence of Geobacter sp. M21.</title>
        <authorList>
            <consortium name="US DOE Joint Genome Institute"/>
            <person name="Lucas S."/>
            <person name="Copeland A."/>
            <person name="Lapidus A."/>
            <person name="Glavina del Rio T."/>
            <person name="Dalin E."/>
            <person name="Tice H."/>
            <person name="Bruce D."/>
            <person name="Goodwin L."/>
            <person name="Pitluck S."/>
            <person name="Saunders E."/>
            <person name="Brettin T."/>
            <person name="Detter J.C."/>
            <person name="Han C."/>
            <person name="Larimer F."/>
            <person name="Land M."/>
            <person name="Hauser L."/>
            <person name="Kyrpides N."/>
            <person name="Ovchinnikova G."/>
            <person name="Lovley D."/>
        </authorList>
    </citation>
    <scope>NUCLEOTIDE SEQUENCE [LARGE SCALE GENOMIC DNA]</scope>
    <source>
        <strain>M21</strain>
    </source>
</reference>
<evidence type="ECO:0000255" key="1">
    <source>
        <dbReference type="HAMAP-Rule" id="MF_00122"/>
    </source>
</evidence>
<keyword id="KW-0067">ATP-binding</keyword>
<keyword id="KW-0436">Ligase</keyword>
<keyword id="KW-0547">Nucleotide-binding</keyword>
<keyword id="KW-0648">Protein biosynthesis</keyword>
<proteinExistence type="inferred from homology"/>
<organism>
    <name type="scientific">Geobacter sp. (strain M21)</name>
    <dbReference type="NCBI Taxonomy" id="443144"/>
    <lineage>
        <taxon>Bacteria</taxon>
        <taxon>Pseudomonadati</taxon>
        <taxon>Thermodesulfobacteriota</taxon>
        <taxon>Desulfuromonadia</taxon>
        <taxon>Geobacterales</taxon>
        <taxon>Geobacteraceae</taxon>
        <taxon>Geobacter</taxon>
    </lineage>
</organism>
<gene>
    <name evidence="1" type="primary">gatC</name>
    <name type="ordered locus">GM21_3750</name>
</gene>
<name>GATC_GEOSM</name>
<accession>C6E6Z1</accession>
<dbReference type="EC" id="6.3.5.-" evidence="1"/>
<dbReference type="EMBL" id="CP001661">
    <property type="protein sequence ID" value="ACT19769.1"/>
    <property type="molecule type" value="Genomic_DNA"/>
</dbReference>
<dbReference type="SMR" id="C6E6Z1"/>
<dbReference type="STRING" id="443144.GM21_3750"/>
<dbReference type="KEGG" id="gem:GM21_3750"/>
<dbReference type="eggNOG" id="COG0721">
    <property type="taxonomic scope" value="Bacteria"/>
</dbReference>
<dbReference type="HOGENOM" id="CLU_105899_1_2_7"/>
<dbReference type="OrthoDB" id="9813938at2"/>
<dbReference type="GO" id="GO:0050566">
    <property type="term" value="F:asparaginyl-tRNA synthase (glutamine-hydrolyzing) activity"/>
    <property type="evidence" value="ECO:0007669"/>
    <property type="project" value="RHEA"/>
</dbReference>
<dbReference type="GO" id="GO:0005524">
    <property type="term" value="F:ATP binding"/>
    <property type="evidence" value="ECO:0007669"/>
    <property type="project" value="UniProtKB-KW"/>
</dbReference>
<dbReference type="GO" id="GO:0050567">
    <property type="term" value="F:glutaminyl-tRNA synthase (glutamine-hydrolyzing) activity"/>
    <property type="evidence" value="ECO:0007669"/>
    <property type="project" value="UniProtKB-UniRule"/>
</dbReference>
<dbReference type="GO" id="GO:0070681">
    <property type="term" value="P:glutaminyl-tRNAGln biosynthesis via transamidation"/>
    <property type="evidence" value="ECO:0007669"/>
    <property type="project" value="TreeGrafter"/>
</dbReference>
<dbReference type="GO" id="GO:0006450">
    <property type="term" value="P:regulation of translational fidelity"/>
    <property type="evidence" value="ECO:0007669"/>
    <property type="project" value="InterPro"/>
</dbReference>
<dbReference type="GO" id="GO:0006412">
    <property type="term" value="P:translation"/>
    <property type="evidence" value="ECO:0007669"/>
    <property type="project" value="UniProtKB-UniRule"/>
</dbReference>
<dbReference type="Gene3D" id="1.10.20.60">
    <property type="entry name" value="Glu-tRNAGln amidotransferase C subunit, N-terminal domain"/>
    <property type="match status" value="1"/>
</dbReference>
<dbReference type="HAMAP" id="MF_00122">
    <property type="entry name" value="GatC"/>
    <property type="match status" value="1"/>
</dbReference>
<dbReference type="InterPro" id="IPR036113">
    <property type="entry name" value="Asp/Glu-ADT_sf_sub_c"/>
</dbReference>
<dbReference type="InterPro" id="IPR003837">
    <property type="entry name" value="GatC"/>
</dbReference>
<dbReference type="NCBIfam" id="TIGR00135">
    <property type="entry name" value="gatC"/>
    <property type="match status" value="1"/>
</dbReference>
<dbReference type="PANTHER" id="PTHR15004">
    <property type="entry name" value="GLUTAMYL-TRNA(GLN) AMIDOTRANSFERASE SUBUNIT C, MITOCHONDRIAL"/>
    <property type="match status" value="1"/>
</dbReference>
<dbReference type="PANTHER" id="PTHR15004:SF0">
    <property type="entry name" value="GLUTAMYL-TRNA(GLN) AMIDOTRANSFERASE SUBUNIT C, MITOCHONDRIAL"/>
    <property type="match status" value="1"/>
</dbReference>
<dbReference type="Pfam" id="PF02686">
    <property type="entry name" value="GatC"/>
    <property type="match status" value="1"/>
</dbReference>
<dbReference type="SUPFAM" id="SSF141000">
    <property type="entry name" value="Glu-tRNAGln amidotransferase C subunit"/>
    <property type="match status" value="1"/>
</dbReference>